<evidence type="ECO:0000250" key="1">
    <source>
        <dbReference type="UniProtKB" id="Q6PAL0"/>
    </source>
</evidence>
<evidence type="ECO:0000255" key="2">
    <source>
        <dbReference type="PROSITE-ProRule" id="PRU00784"/>
    </source>
</evidence>
<evidence type="ECO:0000256" key="3">
    <source>
        <dbReference type="SAM" id="MobiDB-lite"/>
    </source>
</evidence>
<evidence type="ECO:0000269" key="4">
    <source>
    </source>
</evidence>
<evidence type="ECO:0000269" key="5">
    <source>
    </source>
</evidence>
<evidence type="ECO:0000269" key="6">
    <source>
    </source>
</evidence>
<evidence type="ECO:0000269" key="7">
    <source>
    </source>
</evidence>
<evidence type="ECO:0000269" key="8">
    <source>
    </source>
</evidence>
<evidence type="ECO:0000305" key="9"/>
<evidence type="ECO:0007744" key="10">
    <source>
    </source>
</evidence>
<evidence type="ECO:0007744" key="11">
    <source>
    </source>
</evidence>
<evidence type="ECO:0007744" key="12">
    <source>
    </source>
</evidence>
<evidence type="ECO:0007744" key="13">
    <source>
    </source>
</evidence>
<evidence type="ECO:0007744" key="14">
    <source>
    </source>
</evidence>
<evidence type="ECO:0007744" key="15">
    <source>
    </source>
</evidence>
<evidence type="ECO:0007744" key="16">
    <source>
    </source>
</evidence>
<evidence type="ECO:0007744" key="17">
    <source>
    </source>
</evidence>
<evidence type="ECO:0007829" key="18">
    <source>
        <dbReference type="PDB" id="5JNO"/>
    </source>
</evidence>
<evidence type="ECO:0007829" key="19">
    <source>
        <dbReference type="PDB" id="7W27"/>
    </source>
</evidence>
<accession>Q5T5X7</accession>
<accession>A2RRH2</accession>
<accession>Q9HCL9</accession>
<gene>
    <name type="primary">BEND3</name>
    <name type="synonym">KIAA1553</name>
</gene>
<keyword id="KW-0002">3D-structure</keyword>
<keyword id="KW-0156">Chromatin regulator</keyword>
<keyword id="KW-0238">DNA-binding</keyword>
<keyword id="KW-1017">Isopeptide bond</keyword>
<keyword id="KW-0539">Nucleus</keyword>
<keyword id="KW-0597">Phosphoprotein</keyword>
<keyword id="KW-1267">Proteomics identification</keyword>
<keyword id="KW-1185">Reference proteome</keyword>
<keyword id="KW-0677">Repeat</keyword>
<keyword id="KW-0678">Repressor</keyword>
<keyword id="KW-0804">Transcription</keyword>
<keyword id="KW-0805">Transcription regulation</keyword>
<keyword id="KW-0832">Ubl conjugation</keyword>
<reference key="1">
    <citation type="journal article" date="2003" name="Nature">
        <title>The DNA sequence and analysis of human chromosome 6.</title>
        <authorList>
            <person name="Mungall A.J."/>
            <person name="Palmer S.A."/>
            <person name="Sims S.K."/>
            <person name="Edwards C.A."/>
            <person name="Ashurst J.L."/>
            <person name="Wilming L."/>
            <person name="Jones M.C."/>
            <person name="Horton R."/>
            <person name="Hunt S.E."/>
            <person name="Scott C.E."/>
            <person name="Gilbert J.G.R."/>
            <person name="Clamp M.E."/>
            <person name="Bethel G."/>
            <person name="Milne S."/>
            <person name="Ainscough R."/>
            <person name="Almeida J.P."/>
            <person name="Ambrose K.D."/>
            <person name="Andrews T.D."/>
            <person name="Ashwell R.I.S."/>
            <person name="Babbage A.K."/>
            <person name="Bagguley C.L."/>
            <person name="Bailey J."/>
            <person name="Banerjee R."/>
            <person name="Barker D.J."/>
            <person name="Barlow K.F."/>
            <person name="Bates K."/>
            <person name="Beare D.M."/>
            <person name="Beasley H."/>
            <person name="Beasley O."/>
            <person name="Bird C.P."/>
            <person name="Blakey S.E."/>
            <person name="Bray-Allen S."/>
            <person name="Brook J."/>
            <person name="Brown A.J."/>
            <person name="Brown J.Y."/>
            <person name="Burford D.C."/>
            <person name="Burrill W."/>
            <person name="Burton J."/>
            <person name="Carder C."/>
            <person name="Carter N.P."/>
            <person name="Chapman J.C."/>
            <person name="Clark S.Y."/>
            <person name="Clark G."/>
            <person name="Clee C.M."/>
            <person name="Clegg S."/>
            <person name="Cobley V."/>
            <person name="Collier R.E."/>
            <person name="Collins J.E."/>
            <person name="Colman L.K."/>
            <person name="Corby N.R."/>
            <person name="Coville G.J."/>
            <person name="Culley K.M."/>
            <person name="Dhami P."/>
            <person name="Davies J."/>
            <person name="Dunn M."/>
            <person name="Earthrowl M.E."/>
            <person name="Ellington A.E."/>
            <person name="Evans K.A."/>
            <person name="Faulkner L."/>
            <person name="Francis M.D."/>
            <person name="Frankish A."/>
            <person name="Frankland J."/>
            <person name="French L."/>
            <person name="Garner P."/>
            <person name="Garnett J."/>
            <person name="Ghori M.J."/>
            <person name="Gilby L.M."/>
            <person name="Gillson C.J."/>
            <person name="Glithero R.J."/>
            <person name="Grafham D.V."/>
            <person name="Grant M."/>
            <person name="Gribble S."/>
            <person name="Griffiths C."/>
            <person name="Griffiths M.N.D."/>
            <person name="Hall R."/>
            <person name="Halls K.S."/>
            <person name="Hammond S."/>
            <person name="Harley J.L."/>
            <person name="Hart E.A."/>
            <person name="Heath P.D."/>
            <person name="Heathcott R."/>
            <person name="Holmes S.J."/>
            <person name="Howden P.J."/>
            <person name="Howe K.L."/>
            <person name="Howell G.R."/>
            <person name="Huckle E."/>
            <person name="Humphray S.J."/>
            <person name="Humphries M.D."/>
            <person name="Hunt A.R."/>
            <person name="Johnson C.M."/>
            <person name="Joy A.A."/>
            <person name="Kay M."/>
            <person name="Keenan S.J."/>
            <person name="Kimberley A.M."/>
            <person name="King A."/>
            <person name="Laird G.K."/>
            <person name="Langford C."/>
            <person name="Lawlor S."/>
            <person name="Leongamornlert D.A."/>
            <person name="Leversha M."/>
            <person name="Lloyd C.R."/>
            <person name="Lloyd D.M."/>
            <person name="Loveland J.E."/>
            <person name="Lovell J."/>
            <person name="Martin S."/>
            <person name="Mashreghi-Mohammadi M."/>
            <person name="Maslen G.L."/>
            <person name="Matthews L."/>
            <person name="McCann O.T."/>
            <person name="McLaren S.J."/>
            <person name="McLay K."/>
            <person name="McMurray A."/>
            <person name="Moore M.J.F."/>
            <person name="Mullikin J.C."/>
            <person name="Niblett D."/>
            <person name="Nickerson T."/>
            <person name="Novik K.L."/>
            <person name="Oliver K."/>
            <person name="Overton-Larty E.K."/>
            <person name="Parker A."/>
            <person name="Patel R."/>
            <person name="Pearce A.V."/>
            <person name="Peck A.I."/>
            <person name="Phillimore B.J.C.T."/>
            <person name="Phillips S."/>
            <person name="Plumb R.W."/>
            <person name="Porter K.M."/>
            <person name="Ramsey Y."/>
            <person name="Ranby S.A."/>
            <person name="Rice C.M."/>
            <person name="Ross M.T."/>
            <person name="Searle S.M."/>
            <person name="Sehra H.K."/>
            <person name="Sheridan E."/>
            <person name="Skuce C.D."/>
            <person name="Smith S."/>
            <person name="Smith M."/>
            <person name="Spraggon L."/>
            <person name="Squares S.L."/>
            <person name="Steward C.A."/>
            <person name="Sycamore N."/>
            <person name="Tamlyn-Hall G."/>
            <person name="Tester J."/>
            <person name="Theaker A.J."/>
            <person name="Thomas D.W."/>
            <person name="Thorpe A."/>
            <person name="Tracey A."/>
            <person name="Tromans A."/>
            <person name="Tubby B."/>
            <person name="Wall M."/>
            <person name="Wallis J.M."/>
            <person name="West A.P."/>
            <person name="White S.S."/>
            <person name="Whitehead S.L."/>
            <person name="Whittaker H."/>
            <person name="Wild A."/>
            <person name="Willey D.J."/>
            <person name="Wilmer T.E."/>
            <person name="Wood J.M."/>
            <person name="Wray P.W."/>
            <person name="Wyatt J.C."/>
            <person name="Young L."/>
            <person name="Younger R.M."/>
            <person name="Bentley D.R."/>
            <person name="Coulson A."/>
            <person name="Durbin R.M."/>
            <person name="Hubbard T."/>
            <person name="Sulston J.E."/>
            <person name="Dunham I."/>
            <person name="Rogers J."/>
            <person name="Beck S."/>
        </authorList>
    </citation>
    <scope>NUCLEOTIDE SEQUENCE [LARGE SCALE GENOMIC DNA]</scope>
</reference>
<reference key="2">
    <citation type="journal article" date="2004" name="Genome Res.">
        <title>The status, quality, and expansion of the NIH full-length cDNA project: the Mammalian Gene Collection (MGC).</title>
        <authorList>
            <consortium name="The MGC Project Team"/>
        </authorList>
    </citation>
    <scope>NUCLEOTIDE SEQUENCE [LARGE SCALE MRNA]</scope>
</reference>
<reference key="3">
    <citation type="journal article" date="2000" name="DNA Res.">
        <title>Prediction of the coding sequences of unidentified human genes. XVIII. The complete sequences of 100 new cDNA clones from brain which code for large proteins in vitro.</title>
        <authorList>
            <person name="Nagase T."/>
            <person name="Kikuno R."/>
            <person name="Nakayama M."/>
            <person name="Hirosawa M."/>
            <person name="Ohara O."/>
        </authorList>
    </citation>
    <scope>NUCLEOTIDE SEQUENCE [LARGE SCALE MRNA] OF 159-828</scope>
</reference>
<reference key="4">
    <citation type="journal article" date="2006" name="Cell">
        <title>Global, in vivo, and site-specific phosphorylation dynamics in signaling networks.</title>
        <authorList>
            <person name="Olsen J.V."/>
            <person name="Blagoev B."/>
            <person name="Gnad F."/>
            <person name="Macek B."/>
            <person name="Kumar C."/>
            <person name="Mortensen P."/>
            <person name="Mann M."/>
        </authorList>
    </citation>
    <scope>PHOSPHORYLATION [LARGE SCALE ANALYSIS] AT SER-489</scope>
    <scope>IDENTIFICATION BY MASS SPECTROMETRY [LARGE SCALE ANALYSIS]</scope>
    <source>
        <tissue>Cervix carcinoma</tissue>
    </source>
</reference>
<reference key="5">
    <citation type="journal article" date="2008" name="Proc. Natl. Acad. Sci. U.S.A.">
        <title>A quantitative atlas of mitotic phosphorylation.</title>
        <authorList>
            <person name="Dephoure N."/>
            <person name="Zhou C."/>
            <person name="Villen J."/>
            <person name="Beausoleil S.A."/>
            <person name="Bakalarski C.E."/>
            <person name="Elledge S.J."/>
            <person name="Gygi S.P."/>
        </authorList>
    </citation>
    <scope>IDENTIFICATION BY MASS SPECTROMETRY [LARGE SCALE ANALYSIS]</scope>
    <source>
        <tissue>Cervix carcinoma</tissue>
    </source>
</reference>
<reference key="6">
    <citation type="journal article" date="2010" name="Sci. Signal.">
        <title>Quantitative phosphoproteomics reveals widespread full phosphorylation site occupancy during mitosis.</title>
        <authorList>
            <person name="Olsen J.V."/>
            <person name="Vermeulen M."/>
            <person name="Santamaria A."/>
            <person name="Kumar C."/>
            <person name="Miller M.L."/>
            <person name="Jensen L.J."/>
            <person name="Gnad F."/>
            <person name="Cox J."/>
            <person name="Jensen T.S."/>
            <person name="Nigg E.A."/>
            <person name="Brunak S."/>
            <person name="Mann M."/>
        </authorList>
    </citation>
    <scope>PHOSPHORYLATION [LARGE SCALE ANALYSIS] AT SER-164 AND SER-379</scope>
    <scope>IDENTIFICATION BY MASS SPECTROMETRY [LARGE SCALE ANALYSIS]</scope>
    <source>
        <tissue>Cervix carcinoma</tissue>
    </source>
</reference>
<reference key="7">
    <citation type="journal article" date="2011" name="J. Cell Sci.">
        <title>A BEN-domain-containing protein associates with heterochromatin and represses transcription.</title>
        <authorList>
            <person name="Sathyan K.M."/>
            <person name="Shen Z."/>
            <person name="Tripathi V."/>
            <person name="Prasanth K.V."/>
            <person name="Prasanth S.G."/>
        </authorList>
    </citation>
    <scope>FUNCTION</scope>
    <scope>INTERACTION WITH HDAC2; HDAC3 AND SALL4</scope>
    <scope>SUBCELLULAR LOCATION</scope>
    <scope>TISSUE SPECIFICITY</scope>
    <scope>DOMAIN</scope>
    <scope>SUMOYLATION AT LYS-20 AND LYS-512</scope>
    <scope>MUTAGENESIS OF LYS-20 AND LYS-512</scope>
</reference>
<reference key="8">
    <citation type="journal article" date="2011" name="Sci. Signal.">
        <title>System-wide temporal characterization of the proteome and phosphoproteome of human embryonic stem cell differentiation.</title>
        <authorList>
            <person name="Rigbolt K.T."/>
            <person name="Prokhorova T.A."/>
            <person name="Akimov V."/>
            <person name="Henningsen J."/>
            <person name="Johansen P.T."/>
            <person name="Kratchmarova I."/>
            <person name="Kassem M."/>
            <person name="Mann M."/>
            <person name="Olsen J.V."/>
            <person name="Blagoev B."/>
        </authorList>
    </citation>
    <scope>PHOSPHORYLATION [LARGE SCALE ANALYSIS] AT SER-164; SER-379 AND SER-489</scope>
    <scope>IDENTIFICATION BY MASS SPECTROMETRY [LARGE SCALE ANALYSIS]</scope>
</reference>
<reference key="9">
    <citation type="journal article" date="2014" name="Immun. Inflammation. Dis.">
        <title>Human T cells expressing BEND3 on their surface represent a novel subpopulation that preferentially produces IL-6 and IL-8.</title>
        <authorList>
            <person name="Shiheido H."/>
            <person name="Kitagori K."/>
            <person name="Sasaki C."/>
            <person name="Kobayashi S."/>
            <person name="Aoyama T."/>
            <person name="Urata K."/>
            <person name="Oku T."/>
            <person name="Hirayama Y."/>
            <person name="Yoshitomi H."/>
            <person name="Hikida M."/>
            <person name="Yoshifuji H."/>
            <person name="Mimori T."/>
            <person name="Watanabe T."/>
            <person name="Shimizu J."/>
        </authorList>
    </citation>
    <scope>TISSUE SPECIFICITY</scope>
</reference>
<reference key="10">
    <citation type="journal article" date="2014" name="Nat. Struct. Mol. Biol.">
        <title>Uncovering global SUMOylation signaling networks in a site-specific manner.</title>
        <authorList>
            <person name="Hendriks I.A."/>
            <person name="D'Souza R.C."/>
            <person name="Yang B."/>
            <person name="Verlaan-de Vries M."/>
            <person name="Mann M."/>
            <person name="Vertegaal A.C."/>
        </authorList>
    </citation>
    <scope>SUMOYLATION [LARGE SCALE ANALYSIS] AT LYS-20; LYS-129 AND LYS-427</scope>
    <scope>IDENTIFICATION BY MASS SPECTROMETRY [LARGE SCALE ANALYSIS]</scope>
</reference>
<reference key="11">
    <citation type="journal article" date="2014" name="Proc. Natl. Acad. Sci. U.S.A.">
        <title>Mapping of SUMO sites and analysis of SUMOylation changes induced by external stimuli.</title>
        <authorList>
            <person name="Impens F."/>
            <person name="Radoshevich L."/>
            <person name="Cossart P."/>
            <person name="Ribet D."/>
        </authorList>
    </citation>
    <scope>SUMOYLATION [LARGE SCALE ANALYSIS] AT LYS-20</scope>
    <scope>IDENTIFICATION BY MASS SPECTROMETRY [LARGE SCALE ANALYSIS]</scope>
</reference>
<reference key="12">
    <citation type="journal article" date="2015" name="Biochem. Biophys. Res. Commun.">
        <title>Basic amino acid residues located in the N-terminal region of BEND3 are essential for its nuclear localization.</title>
        <authorList>
            <person name="Shiheido H."/>
            <person name="Shimizu J."/>
        </authorList>
    </citation>
    <scope>SUBCELLULAR LOCATION</scope>
    <scope>MUTAGENESIS OF LYS-56; ARG-57 AND LYS-58</scope>
</reference>
<reference key="13">
    <citation type="journal article" date="2015" name="Cell Rep.">
        <title>SUMO-2 orchestrates chromatin modifiers in response to DNA damage.</title>
        <authorList>
            <person name="Hendriks I.A."/>
            <person name="Treffers L.W."/>
            <person name="Verlaan-de Vries M."/>
            <person name="Olsen J.V."/>
            <person name="Vertegaal A.C."/>
        </authorList>
    </citation>
    <scope>SUMOYLATION [LARGE SCALE ANALYSIS] AT LYS-56 AND LYS-142</scope>
    <scope>IDENTIFICATION BY MASS SPECTROMETRY [LARGE SCALE ANALYSIS]</scope>
</reference>
<reference key="14">
    <citation type="journal article" date="2015" name="Mol. Cell. Proteomics">
        <title>System-wide analysis of SUMOylation dynamics in response to replication stress reveals novel small ubiquitin-like modified target proteins and acceptor lysines relevant for genome stability.</title>
        <authorList>
            <person name="Xiao Z."/>
            <person name="Chang J.G."/>
            <person name="Hendriks I.A."/>
            <person name="Sigurdsson J.O."/>
            <person name="Olsen J.V."/>
            <person name="Vertegaal A.C."/>
        </authorList>
    </citation>
    <scope>SUMOYLATION [LARGE SCALE ANALYSIS] AT LYS-20</scope>
    <scope>IDENTIFICATION BY MASS SPECTROMETRY [LARGE SCALE ANALYSIS]</scope>
</reference>
<reference key="15">
    <citation type="journal article" date="2015" name="Proc. Natl. Acad. Sci. U.S.A.">
        <title>BEND3 represses rDNA transcription by stabilizing a NoRC component via USP21 deubiquitinase.</title>
        <authorList>
            <person name="Khan A."/>
            <person name="Giri S."/>
            <person name="Wang Y."/>
            <person name="Chakraborty A."/>
            <person name="Ghosh A.K."/>
            <person name="Anantharaman A."/>
            <person name="Aggarwal V."/>
            <person name="Sathyan K.M."/>
            <person name="Ha T."/>
            <person name="Prasanth K.V."/>
            <person name="Prasanth S.G."/>
        </authorList>
    </citation>
    <scope>FUNCTION</scope>
    <scope>SUBCELLULAR LOCATION</scope>
    <scope>INTERACTION WITH SMARCA5; BAZ2A AND USP21</scope>
    <scope>MUTAGENESIS OF LYS-20 AND LYS-512</scope>
</reference>
<reference key="16">
    <citation type="journal article" date="2017" name="Nat. Struct. Mol. Biol.">
        <title>Site-specific mapping of the human SUMO proteome reveals co-modification with phosphorylation.</title>
        <authorList>
            <person name="Hendriks I.A."/>
            <person name="Lyon D."/>
            <person name="Young C."/>
            <person name="Jensen L.J."/>
            <person name="Vertegaal A.C."/>
            <person name="Nielsen M.L."/>
        </authorList>
    </citation>
    <scope>SUMOYLATION [LARGE SCALE ANALYSIS] AT LYS-20; LYS-41; LYS-56; LYS-58; LYS-73; LYS-128; LYS-129; LYS-137; LYS-142; LYS-158; LYS-176; LYS-427; LYS-512; LYS-528 AND LYS-700</scope>
    <scope>IDENTIFICATION BY MASS SPECTROMETRY [LARGE SCALE ANALYSIS]</scope>
</reference>
<reference key="17">
    <citation type="journal article" date="2017" name="Nucleic Acids Res.">
        <title>A novel TPR-BEN domain interaction mediates PICH-BEND3 association.</title>
        <authorList>
            <person name="Pitchai G.P."/>
            <person name="Kaulich M."/>
            <person name="Bizard A.H."/>
            <person name="Mesa P."/>
            <person name="Yao Q."/>
            <person name="Sarlos K."/>
            <person name="Streicher W.W."/>
            <person name="Nigg E.A."/>
            <person name="Montoya G."/>
            <person name="Hickson I.D."/>
        </authorList>
    </citation>
    <scope>X-RAY CRYSTALLOGRAPHY (2.20 ANGSTROMS) OF 236-347 IN COMPLEX WITH ERCC6L</scope>
    <scope>FUNCTION</scope>
    <scope>INTERACTION WITH ERCC6L</scope>
    <scope>SUBUNIT</scope>
    <scope>IDENTIFICATION BY MASS SPECTROMETRY</scope>
</reference>
<organism>
    <name type="scientific">Homo sapiens</name>
    <name type="common">Human</name>
    <dbReference type="NCBI Taxonomy" id="9606"/>
    <lineage>
        <taxon>Eukaryota</taxon>
        <taxon>Metazoa</taxon>
        <taxon>Chordata</taxon>
        <taxon>Craniata</taxon>
        <taxon>Vertebrata</taxon>
        <taxon>Euteleostomi</taxon>
        <taxon>Mammalia</taxon>
        <taxon>Eutheria</taxon>
        <taxon>Euarchontoglires</taxon>
        <taxon>Primates</taxon>
        <taxon>Haplorrhini</taxon>
        <taxon>Catarrhini</taxon>
        <taxon>Hominidae</taxon>
        <taxon>Homo</taxon>
    </lineage>
</organism>
<protein>
    <recommendedName>
        <fullName>BEN domain-containing protein 3</fullName>
    </recommendedName>
</protein>
<feature type="chain" id="PRO_0000290200" description="BEN domain-containing protein 3">
    <location>
        <begin position="1"/>
        <end position="828"/>
    </location>
</feature>
<feature type="domain" description="BEN 1" evidence="2">
    <location>
        <begin position="242"/>
        <end position="343"/>
    </location>
</feature>
<feature type="domain" description="BEN 2" evidence="2">
    <location>
        <begin position="387"/>
        <end position="487"/>
    </location>
</feature>
<feature type="domain" description="BEN 3" evidence="2">
    <location>
        <begin position="548"/>
        <end position="650"/>
    </location>
</feature>
<feature type="domain" description="BEN 4" evidence="2">
    <location>
        <begin position="715"/>
        <end position="816"/>
    </location>
</feature>
<feature type="region of interest" description="Disordered" evidence="3">
    <location>
        <begin position="164"/>
        <end position="184"/>
    </location>
</feature>
<feature type="region of interest" description="Disordered" evidence="3">
    <location>
        <begin position="483"/>
        <end position="504"/>
    </location>
</feature>
<feature type="short sequence motif" description="Nuclear localization signal" evidence="6">
    <location>
        <begin position="56"/>
        <end position="58"/>
    </location>
</feature>
<feature type="modified residue" description="Phosphoserine" evidence="11 12">
    <location>
        <position position="164"/>
    </location>
</feature>
<feature type="modified residue" description="Phosphoserine" evidence="11 12">
    <location>
        <position position="379"/>
    </location>
</feature>
<feature type="modified residue" description="Phosphoserine" evidence="10 12">
    <location>
        <position position="489"/>
    </location>
</feature>
<feature type="cross-link" description="Glycyl lysine isopeptide (Lys-Gly) (interchain with G-Cter in SUMO); alternate" evidence="4">
    <location>
        <position position="20"/>
    </location>
</feature>
<feature type="cross-link" description="Glycyl lysine isopeptide (Lys-Gly) (interchain with G-Cter in SUMO1); alternate" evidence="13">
    <location>
        <position position="20"/>
    </location>
</feature>
<feature type="cross-link" description="Glycyl lysine isopeptide (Lys-Gly) (interchain with G-Cter in SUMO2); alternate" evidence="14 15 17">
    <location>
        <position position="20"/>
    </location>
</feature>
<feature type="cross-link" description="Glycyl lysine isopeptide (Lys-Gly) (interchain with G-Cter in SUMO2)" evidence="17">
    <location>
        <position position="41"/>
    </location>
</feature>
<feature type="cross-link" description="Glycyl lysine isopeptide (Lys-Gly) (interchain with G-Cter in SUMO2)" evidence="16 17">
    <location>
        <position position="56"/>
    </location>
</feature>
<feature type="cross-link" description="Glycyl lysine isopeptide (Lys-Gly) (interchain with G-Cter in SUMO2)" evidence="17">
    <location>
        <position position="58"/>
    </location>
</feature>
<feature type="cross-link" description="Glycyl lysine isopeptide (Lys-Gly) (interchain with G-Cter in SUMO2)" evidence="17">
    <location>
        <position position="73"/>
    </location>
</feature>
<feature type="cross-link" description="Glycyl lysine isopeptide (Lys-Gly) (interchain with G-Cter in SUMO2)" evidence="17">
    <location>
        <position position="128"/>
    </location>
</feature>
<feature type="cross-link" description="Glycyl lysine isopeptide (Lys-Gly) (interchain with G-Cter in SUMO2)" evidence="14 17">
    <location>
        <position position="129"/>
    </location>
</feature>
<feature type="cross-link" description="Glycyl lysine isopeptide (Lys-Gly) (interchain with G-Cter in SUMO2)" evidence="17">
    <location>
        <position position="137"/>
    </location>
</feature>
<feature type="cross-link" description="Glycyl lysine isopeptide (Lys-Gly) (interchain with G-Cter in SUMO2)" evidence="16 17">
    <location>
        <position position="142"/>
    </location>
</feature>
<feature type="cross-link" description="Glycyl lysine isopeptide (Lys-Gly) (interchain with G-Cter in SUMO2)" evidence="17">
    <location>
        <position position="158"/>
    </location>
</feature>
<feature type="cross-link" description="Glycyl lysine isopeptide (Lys-Gly) (interchain with G-Cter in SUMO2)" evidence="17">
    <location>
        <position position="176"/>
    </location>
</feature>
<feature type="cross-link" description="Glycyl lysine isopeptide (Lys-Gly) (interchain with G-Cter in SUMO2)" evidence="14 17">
    <location>
        <position position="427"/>
    </location>
</feature>
<feature type="cross-link" description="Glycyl lysine isopeptide (Lys-Gly) (interchain with G-Cter in SUMO); alternate" evidence="4">
    <location>
        <position position="512"/>
    </location>
</feature>
<feature type="cross-link" description="Glycyl lysine isopeptide (Lys-Gly) (interchain with G-Cter in SUMO2); alternate" evidence="17">
    <location>
        <position position="512"/>
    </location>
</feature>
<feature type="cross-link" description="Glycyl lysine isopeptide (Lys-Gly) (interchain with G-Cter in SUMO2)" evidence="17">
    <location>
        <position position="528"/>
    </location>
</feature>
<feature type="cross-link" description="Glycyl lysine isopeptide (Lys-Gly) (interchain with G-Cter in SUMO2)" evidence="17">
    <location>
        <position position="700"/>
    </location>
</feature>
<feature type="mutagenesis site" description="Partial loss of sumoylation. Almost complete loss of sumoylation, partial loss of transcription repression, no effect on subcellular location, loss of rDNA silencing; when associated with R-512." evidence="4 7">
    <original>K</original>
    <variation>R</variation>
    <location>
        <position position="20"/>
    </location>
</feature>
<feature type="mutagenesis site" description="Loss of nuclear localization." evidence="6">
    <original>K</original>
    <variation>A</variation>
    <location>
        <position position="56"/>
    </location>
</feature>
<feature type="mutagenesis site" description="Loss of nuclear localization." evidence="6">
    <original>R</original>
    <variation>A</variation>
    <location>
        <position position="57"/>
    </location>
</feature>
<feature type="mutagenesis site" description="Loss of nuclear localization." evidence="6">
    <original>K</original>
    <variation>A</variation>
    <location>
        <position position="58"/>
    </location>
</feature>
<feature type="mutagenesis site" description="Partial loss of sumoylation. Almost complete loss of sumoylation, partial loss of transcription repression, no effect on subcellular location, loss of rDNA silencing; when associated with R-20." evidence="4 7">
    <original>K</original>
    <variation>R</variation>
    <location>
        <position position="512"/>
    </location>
</feature>
<feature type="sequence conflict" description="In Ref. 3; BAB13379." evidence="9" ref="3">
    <original>E</original>
    <variation>D</variation>
    <location>
        <position position="409"/>
    </location>
</feature>
<feature type="sequence conflict" description="In Ref. 2; AAI31629." evidence="9" ref="2">
    <original>N</original>
    <variation>S</variation>
    <location>
        <position position="596"/>
    </location>
</feature>
<feature type="helix" evidence="18">
    <location>
        <begin position="244"/>
        <end position="246"/>
    </location>
</feature>
<feature type="helix" evidence="18">
    <location>
        <begin position="250"/>
        <end position="259"/>
    </location>
</feature>
<feature type="helix" evidence="18">
    <location>
        <begin position="263"/>
        <end position="274"/>
    </location>
</feature>
<feature type="helix" evidence="18">
    <location>
        <begin position="276"/>
        <end position="279"/>
    </location>
</feature>
<feature type="helix" evidence="18">
    <location>
        <begin position="301"/>
        <end position="314"/>
    </location>
</feature>
<feature type="helix" evidence="18">
    <location>
        <begin position="316"/>
        <end position="319"/>
    </location>
</feature>
<feature type="helix" evidence="18">
    <location>
        <begin position="321"/>
        <end position="326"/>
    </location>
</feature>
<feature type="helix" evidence="18">
    <location>
        <begin position="328"/>
        <end position="346"/>
    </location>
</feature>
<feature type="helix" evidence="19">
    <location>
        <begin position="723"/>
        <end position="730"/>
    </location>
</feature>
<feature type="helix" evidence="19">
    <location>
        <begin position="736"/>
        <end position="747"/>
    </location>
</feature>
<feature type="helix" evidence="19">
    <location>
        <begin position="749"/>
        <end position="751"/>
    </location>
</feature>
<feature type="helix" evidence="19">
    <location>
        <begin position="757"/>
        <end position="760"/>
    </location>
</feature>
<feature type="strand" evidence="19">
    <location>
        <begin position="761"/>
        <end position="764"/>
    </location>
</feature>
<feature type="turn" evidence="19">
    <location>
        <begin position="766"/>
        <end position="768"/>
    </location>
</feature>
<feature type="helix" evidence="19">
    <location>
        <begin position="774"/>
        <end position="787"/>
    </location>
</feature>
<feature type="helix" evidence="19">
    <location>
        <begin position="793"/>
        <end position="799"/>
    </location>
</feature>
<feature type="helix" evidence="19">
    <location>
        <begin position="801"/>
        <end position="810"/>
    </location>
</feature>
<feature type="helix" evidence="19">
    <location>
        <begin position="816"/>
        <end position="822"/>
    </location>
</feature>
<name>BEND3_HUMAN</name>
<comment type="function">
    <text evidence="1 4 7 8">Transcriptional repressor which associates with the NoRC (nucleolar remodeling complex) complex and plays a key role in repressing rDNA transcription. The sumoylated form modulates the stability of the NoRC complex component BAZ2A/TIP5 by controlling its USP21-mediated deubiquitination (PubMed:21914818, PubMed:26100909). Binds to unmethylated major satellite DNA and is involved in the recruitment of the Polycomb repressive complex 2 (PRC2) to major satellites (By similarity). Stimulates the ERCC6L translocase and ATPase activities (PubMed:28977671).</text>
</comment>
<comment type="subunit">
    <text evidence="1 4 7 8">Homooligomer, probably a homooctamer (PubMed:28977671). Interacts with HDAC2 and HDAC3, but not HDAC1. Interacts with SALL4 (PubMed:21914818). Interacts with SMARCA5/SNF2H, BAZ2A/TIP5 and USP21 (PubMed:26100909). Interacts with the nucleosome remodeling and histone deacetylase (NuRD) repressor complex (By similarity). Interacts (via BEN domains 1 and 3) with ERCC6L (via N-terminal TPR repeat); the interaction is direct (PubMed:28977671).</text>
</comment>
<comment type="interaction">
    <interactant intactId="EBI-1211496">
        <id>Q5T5X7</id>
    </interactant>
    <interactant intactId="EBI-744973">
        <id>Q9C005</id>
        <label>DPY30</label>
    </interactant>
    <organismsDiffer>false</organismsDiffer>
    <experiments>3</experiments>
</comment>
<comment type="interaction">
    <interactant intactId="EBI-1211496">
        <id>Q5T5X7</id>
    </interactant>
    <interactant intactId="EBI-719941">
        <id>Q3B820</id>
        <label>FAM161A</label>
    </interactant>
    <organismsDiffer>false</organismsDiffer>
    <experiments>3</experiments>
</comment>
<comment type="interaction">
    <interactant intactId="EBI-1211496">
        <id>Q5T5X7</id>
    </interactant>
    <interactant intactId="EBI-348259">
        <id>Q96EZ8</id>
        <label>MCRS1</label>
    </interactant>
    <organismsDiffer>false</organismsDiffer>
    <experiments>3</experiments>
</comment>
<comment type="interaction">
    <interactant intactId="EBI-1211496">
        <id>Q5T5X7</id>
    </interactant>
    <interactant intactId="EBI-10269566">
        <id>Q8NDC4</id>
        <label>MORN4</label>
    </interactant>
    <organismsDiffer>false</organismsDiffer>
    <experiments>6</experiments>
</comment>
<comment type="interaction">
    <interactant intactId="EBI-1211496">
        <id>Q5T5X7</id>
    </interactant>
    <interactant intactId="EBI-17208936">
        <id>P0CB47</id>
        <label>UBTFL1</label>
    </interactant>
    <organismsDiffer>false</organismsDiffer>
    <experiments>3</experiments>
</comment>
<comment type="subcellular location">
    <subcellularLocation>
        <location evidence="4 6">Nucleus</location>
    </subcellularLocation>
    <subcellularLocation>
        <location evidence="7">Nucleus</location>
        <location evidence="7">Nucleolus</location>
    </subcellularLocation>
    <text evidence="4">In the nucleus, observed in heterochromatic foci containing CBX1, CBX3, CBX5 and histone H3 trimethylated at 'Lys-9'. Released from chromatin during decondensation. Association with heterochromatin does not depend on sumoylation.</text>
</comment>
<comment type="tissue specificity">
    <text evidence="4 5">Expressed at least in heart, kidney, liver, ovary and spleen, with highest levels in spleen and lowest in heart. Expressed on the surface of T-cells.</text>
</comment>
<comment type="domain">
    <text evidence="4">The BEN domain 4 is necessary and sufficient for the localization of BEND3 to heterochromatic regions.</text>
</comment>
<comment type="PTM">
    <text evidence="4">Sumoylated at Lys-20 by SUMO1 and at Lys-512 by SUMO1, SUMO2 and SUMO3. Sumoylation probably occurs sequentially, with that of Lys-20 preceding that of Lys-512. It does not alter association with heterochromatin, but is required for the repression of transcription.</text>
</comment>
<dbReference type="EMBL" id="AL355586">
    <property type="status" value="NOT_ANNOTATED_CDS"/>
    <property type="molecule type" value="Genomic_DNA"/>
</dbReference>
<dbReference type="EMBL" id="BC131628">
    <property type="protein sequence ID" value="AAI31629.1"/>
    <property type="molecule type" value="mRNA"/>
</dbReference>
<dbReference type="EMBL" id="AB046773">
    <property type="protein sequence ID" value="BAB13379.1"/>
    <property type="molecule type" value="mRNA"/>
</dbReference>
<dbReference type="CCDS" id="CCDS34507.1"/>
<dbReference type="RefSeq" id="NP_001073919.1">
    <property type="nucleotide sequence ID" value="NM_001080450.3"/>
</dbReference>
<dbReference type="RefSeq" id="NP_001354243.1">
    <property type="nucleotide sequence ID" value="NM_001367314.1"/>
</dbReference>
<dbReference type="RefSeq" id="XP_005267136.1">
    <property type="nucleotide sequence ID" value="XM_005267079.3"/>
</dbReference>
<dbReference type="RefSeq" id="XP_005267137.1">
    <property type="nucleotide sequence ID" value="XM_005267080.5"/>
</dbReference>
<dbReference type="RefSeq" id="XP_011534307.1">
    <property type="nucleotide sequence ID" value="XM_011536005.4"/>
</dbReference>
<dbReference type="RefSeq" id="XP_016866627.1">
    <property type="nucleotide sequence ID" value="XM_017011138.1"/>
</dbReference>
<dbReference type="RefSeq" id="XP_054212085.1">
    <property type="nucleotide sequence ID" value="XM_054356110.1"/>
</dbReference>
<dbReference type="RefSeq" id="XP_054212086.1">
    <property type="nucleotide sequence ID" value="XM_054356111.1"/>
</dbReference>
<dbReference type="PDB" id="5JNO">
    <property type="method" value="X-ray"/>
    <property type="resolution" value="2.20 A"/>
    <property type="chains" value="A=236-347"/>
</dbReference>
<dbReference type="PDB" id="7W27">
    <property type="method" value="X-ray"/>
    <property type="resolution" value="1.49 A"/>
    <property type="chains" value="C=715-825"/>
</dbReference>
<dbReference type="PDBsum" id="5JNO"/>
<dbReference type="PDBsum" id="7W27"/>
<dbReference type="SMR" id="Q5T5X7"/>
<dbReference type="BioGRID" id="121704">
    <property type="interactions" value="131"/>
</dbReference>
<dbReference type="FunCoup" id="Q5T5X7">
    <property type="interactions" value="1703"/>
</dbReference>
<dbReference type="IntAct" id="Q5T5X7">
    <property type="interactions" value="63"/>
</dbReference>
<dbReference type="MINT" id="Q5T5X7"/>
<dbReference type="STRING" id="9606.ENSP00000411268"/>
<dbReference type="GlyGen" id="Q5T5X7">
    <property type="glycosylation" value="2 sites, 1 N-linked glycan (1 site), 1 O-linked glycan (1 site)"/>
</dbReference>
<dbReference type="iPTMnet" id="Q5T5X7"/>
<dbReference type="PhosphoSitePlus" id="Q5T5X7"/>
<dbReference type="SwissPalm" id="Q5T5X7"/>
<dbReference type="BioMuta" id="BEND3"/>
<dbReference type="DMDM" id="74745144"/>
<dbReference type="jPOST" id="Q5T5X7"/>
<dbReference type="MassIVE" id="Q5T5X7"/>
<dbReference type="PaxDb" id="9606-ENSP00000411268"/>
<dbReference type="PeptideAtlas" id="Q5T5X7"/>
<dbReference type="ProteomicsDB" id="64557"/>
<dbReference type="Pumba" id="Q5T5X7"/>
<dbReference type="Antibodypedia" id="2976">
    <property type="antibodies" value="115 antibodies from 19 providers"/>
</dbReference>
<dbReference type="DNASU" id="57673"/>
<dbReference type="Ensembl" id="ENST00000369042.6">
    <property type="protein sequence ID" value="ENSP00000358038.1"/>
    <property type="gene ID" value="ENSG00000178409.14"/>
</dbReference>
<dbReference type="Ensembl" id="ENST00000429433.3">
    <property type="protein sequence ID" value="ENSP00000411268.2"/>
    <property type="gene ID" value="ENSG00000178409.14"/>
</dbReference>
<dbReference type="GeneID" id="57673"/>
<dbReference type="KEGG" id="hsa:57673"/>
<dbReference type="MANE-Select" id="ENST00000369042.6">
    <property type="protein sequence ID" value="ENSP00000358038.1"/>
    <property type="RefSeq nucleotide sequence ID" value="NM_001367314.1"/>
    <property type="RefSeq protein sequence ID" value="NP_001354243.1"/>
</dbReference>
<dbReference type="UCSC" id="uc003prs.3">
    <property type="organism name" value="human"/>
</dbReference>
<dbReference type="AGR" id="HGNC:23040"/>
<dbReference type="CTD" id="57673"/>
<dbReference type="DisGeNET" id="57673"/>
<dbReference type="GeneCards" id="BEND3"/>
<dbReference type="HGNC" id="HGNC:23040">
    <property type="gene designation" value="BEND3"/>
</dbReference>
<dbReference type="HPA" id="ENSG00000178409">
    <property type="expression patterns" value="Low tissue specificity"/>
</dbReference>
<dbReference type="MIM" id="616374">
    <property type="type" value="gene"/>
</dbReference>
<dbReference type="neXtProt" id="NX_Q5T5X7"/>
<dbReference type="OpenTargets" id="ENSG00000178409"/>
<dbReference type="PharmGKB" id="PA164716540"/>
<dbReference type="VEuPathDB" id="HostDB:ENSG00000178409"/>
<dbReference type="eggNOG" id="ENOG502QQWG">
    <property type="taxonomic scope" value="Eukaryota"/>
</dbReference>
<dbReference type="GeneTree" id="ENSGT00390000010827"/>
<dbReference type="HOGENOM" id="CLU_017582_0_0_1"/>
<dbReference type="InParanoid" id="Q5T5X7"/>
<dbReference type="OMA" id="AEHPQTY"/>
<dbReference type="OrthoDB" id="9927103at2759"/>
<dbReference type="PAN-GO" id="Q5T5X7">
    <property type="GO annotations" value="3 GO annotations based on evolutionary models"/>
</dbReference>
<dbReference type="PhylomeDB" id="Q5T5X7"/>
<dbReference type="TreeFam" id="TF300204"/>
<dbReference type="PathwayCommons" id="Q5T5X7"/>
<dbReference type="SignaLink" id="Q5T5X7"/>
<dbReference type="BioGRID-ORCS" id="57673">
    <property type="hits" value="36 hits in 1155 CRISPR screens"/>
</dbReference>
<dbReference type="CD-CODE" id="91857CE7">
    <property type="entry name" value="Nucleolus"/>
</dbReference>
<dbReference type="ChiTaRS" id="BEND3">
    <property type="organism name" value="human"/>
</dbReference>
<dbReference type="GenomeRNAi" id="57673"/>
<dbReference type="Pharos" id="Q5T5X7">
    <property type="development level" value="Tbio"/>
</dbReference>
<dbReference type="PRO" id="PR:Q5T5X7"/>
<dbReference type="Proteomes" id="UP000005640">
    <property type="component" value="Chromosome 6"/>
</dbReference>
<dbReference type="RNAct" id="Q5T5X7">
    <property type="molecule type" value="protein"/>
</dbReference>
<dbReference type="Bgee" id="ENSG00000178409">
    <property type="expression patterns" value="Expressed in ileal mucosa and 154 other cell types or tissues"/>
</dbReference>
<dbReference type="GO" id="GO:0000792">
    <property type="term" value="C:heterochromatin"/>
    <property type="evidence" value="ECO:0000314"/>
    <property type="project" value="UniProtKB"/>
</dbReference>
<dbReference type="GO" id="GO:0005730">
    <property type="term" value="C:nucleolus"/>
    <property type="evidence" value="ECO:0000314"/>
    <property type="project" value="UniProtKB"/>
</dbReference>
<dbReference type="GO" id="GO:0005654">
    <property type="term" value="C:nucleoplasm"/>
    <property type="evidence" value="ECO:0000314"/>
    <property type="project" value="HPA"/>
</dbReference>
<dbReference type="GO" id="GO:0000182">
    <property type="term" value="F:rDNA binding"/>
    <property type="evidence" value="ECO:0000314"/>
    <property type="project" value="UniProtKB"/>
</dbReference>
<dbReference type="GO" id="GO:0006346">
    <property type="term" value="P:DNA methylation-dependent constitutive heterochromatin formation"/>
    <property type="evidence" value="ECO:0000315"/>
    <property type="project" value="UniProtKB"/>
</dbReference>
<dbReference type="GO" id="GO:0000122">
    <property type="term" value="P:negative regulation of transcription by RNA polymerase II"/>
    <property type="evidence" value="ECO:0000314"/>
    <property type="project" value="UniProtKB"/>
</dbReference>
<dbReference type="GO" id="GO:1903580">
    <property type="term" value="P:positive regulation of ATP metabolic process"/>
    <property type="evidence" value="ECO:0000314"/>
    <property type="project" value="UniProtKB"/>
</dbReference>
<dbReference type="GO" id="GO:0051260">
    <property type="term" value="P:protein homooligomerization"/>
    <property type="evidence" value="ECO:0000314"/>
    <property type="project" value="UniProtKB"/>
</dbReference>
<dbReference type="GO" id="GO:0000183">
    <property type="term" value="P:rDNA heterochromatin formation"/>
    <property type="evidence" value="ECO:0000315"/>
    <property type="project" value="UniProtKB"/>
</dbReference>
<dbReference type="InterPro" id="IPR018379">
    <property type="entry name" value="BEN_domain"/>
</dbReference>
<dbReference type="InterPro" id="IPR033583">
    <property type="entry name" value="BEND3"/>
</dbReference>
<dbReference type="PANTHER" id="PTHR28665">
    <property type="entry name" value="BEN DOMAIN-CONTAINING PROTEIN 3"/>
    <property type="match status" value="1"/>
</dbReference>
<dbReference type="PANTHER" id="PTHR28665:SF1">
    <property type="entry name" value="BEN DOMAIN-CONTAINING PROTEIN 3"/>
    <property type="match status" value="1"/>
</dbReference>
<dbReference type="Pfam" id="PF10523">
    <property type="entry name" value="BEN"/>
    <property type="match status" value="4"/>
</dbReference>
<dbReference type="SMART" id="SM01025">
    <property type="entry name" value="BEN"/>
    <property type="match status" value="4"/>
</dbReference>
<dbReference type="PROSITE" id="PS51457">
    <property type="entry name" value="BEN"/>
    <property type="match status" value="4"/>
</dbReference>
<proteinExistence type="evidence at protein level"/>
<sequence length="828" mass="94475">MNSTEFTEDVEEVLKSITVKVETEAEDAALDCSVNSRTSEKHSVDSVLTALQDSSKRKQLVSDGLLDSVPGVKRRRLIPEALLAGMRNRENSSPCQGNGEQAGRGRSLGNVWPGEEEPCNDATTPSYKKPLYGISHKIMEKKNPPSGDLLNVYELFEKANASNSPSSLRLLNEPQKRDCGSTGAGTDNDPNIYFLIQKMFYMLNTLTSNMSQLHSKVDLLSLEVSRIKKQVSPTEMVAKFQPPPEYQLTAAELKQIVDQSLSGGDLACRLLVQLFPELFSDVDFSRGCSACGFAAKRKLESLHLQLIRNYVEVYYPSVKDTAVWQAECLPQLNDFFSRFWAQREMEDSQPSGQVASFFEAEQVDPGHFLDNKDQEEALSLDRSSTIASDHVVDTQDLTEFLDEASSPGEFAVFLLHRLFPELFDHRKLGEQYSCYGDGGKQELDPQRLQIIRNYTEIYFPDMQEEEAWLQQCAQRINDELEGLGLDAGSEGDPPRDDCYDSSSLPDDISVVKVEDSFEGERPGRRSKKIWLVPIDFDKLEIPQPDFEVPGADCLLSKEQLRSIYESSLSIGNFASRLLVHLFPELFTHENLRKQYNCSGSLGKKQLDPSRIKLIRHYVQLLYPRAKNDRVWTLEFVGKLDERCRRRDTEQRRSYQQQRKVHVPGPECRDLTSYAINPERFREEFEGPPLPPERSSKDFCKIPLDELVVPSPDFPVPSPYLLSDKEVREIVQQSLSVGNFAARLLVRLFPELFTAENLRLQYNHSGACNKKQLDPTRLRLIRHYVEAVYPVEKMEEVWHYECIPSIDERCRRPNRKKCDILKKAKKVEK</sequence>